<sequence length="163" mass="17716">MFRRLIGVVVATVLLSFQLLVGSATAVELDKATRTVPLNAEGETTVLSLKQVKEGKRLFNYACAQCHAGGVTKTNQNVGLTPEDLALATPNRNNIEGLVDYLKNPTTYDGEEEISEIHPSIKSADIFTAMRNLTDEDLEAIAGHILIQPKIVGTKWGGGKIYY</sequence>
<protein>
    <recommendedName>
        <fullName evidence="1">Photosystem II extrinsic protein V</fullName>
        <shortName evidence="1">PsbV</shortName>
    </recommendedName>
    <alternativeName>
        <fullName evidence="1">Cytochrome c-550</fullName>
    </alternativeName>
    <alternativeName>
        <fullName evidence="1">Cytochrome c550</fullName>
    </alternativeName>
    <alternativeName>
        <fullName evidence="1">Low-potential cytochrome c</fullName>
    </alternativeName>
</protein>
<organism>
    <name type="scientific">Nostoc punctiforme (strain ATCC 29133 / PCC 73102)</name>
    <dbReference type="NCBI Taxonomy" id="63737"/>
    <lineage>
        <taxon>Bacteria</taxon>
        <taxon>Bacillati</taxon>
        <taxon>Cyanobacteriota</taxon>
        <taxon>Cyanophyceae</taxon>
        <taxon>Nostocales</taxon>
        <taxon>Nostocaceae</taxon>
        <taxon>Nostoc</taxon>
    </lineage>
</organism>
<dbReference type="EMBL" id="CP001037">
    <property type="protein sequence ID" value="ACC81323.1"/>
    <property type="molecule type" value="Genomic_DNA"/>
</dbReference>
<dbReference type="RefSeq" id="WP_012409316.1">
    <property type="nucleotide sequence ID" value="NC_010628.1"/>
</dbReference>
<dbReference type="SMR" id="B2IVD8"/>
<dbReference type="STRING" id="63737.Npun_R2790"/>
<dbReference type="EnsemblBacteria" id="ACC81323">
    <property type="protein sequence ID" value="ACC81323"/>
    <property type="gene ID" value="Npun_R2790"/>
</dbReference>
<dbReference type="KEGG" id="npu:Npun_R2790"/>
<dbReference type="eggNOG" id="COG2010">
    <property type="taxonomic scope" value="Bacteria"/>
</dbReference>
<dbReference type="HOGENOM" id="CLU_104149_1_0_3"/>
<dbReference type="OrthoDB" id="486949at2"/>
<dbReference type="PhylomeDB" id="B2IVD8"/>
<dbReference type="Proteomes" id="UP000001191">
    <property type="component" value="Chromosome"/>
</dbReference>
<dbReference type="GO" id="GO:0009523">
    <property type="term" value="C:photosystem II"/>
    <property type="evidence" value="ECO:0007669"/>
    <property type="project" value="UniProtKB-KW"/>
</dbReference>
<dbReference type="GO" id="GO:0031676">
    <property type="term" value="C:plasma membrane-derived thylakoid membrane"/>
    <property type="evidence" value="ECO:0007669"/>
    <property type="project" value="UniProtKB-SubCell"/>
</dbReference>
<dbReference type="GO" id="GO:0009055">
    <property type="term" value="F:electron transfer activity"/>
    <property type="evidence" value="ECO:0007669"/>
    <property type="project" value="InterPro"/>
</dbReference>
<dbReference type="GO" id="GO:0020037">
    <property type="term" value="F:heme binding"/>
    <property type="evidence" value="ECO:0007669"/>
    <property type="project" value="InterPro"/>
</dbReference>
<dbReference type="GO" id="GO:0005506">
    <property type="term" value="F:iron ion binding"/>
    <property type="evidence" value="ECO:0007669"/>
    <property type="project" value="InterPro"/>
</dbReference>
<dbReference type="GO" id="GO:0019684">
    <property type="term" value="P:photosynthesis, light reaction"/>
    <property type="evidence" value="ECO:0007669"/>
    <property type="project" value="UniProtKB-UniRule"/>
</dbReference>
<dbReference type="GO" id="GO:0022904">
    <property type="term" value="P:respiratory electron transport chain"/>
    <property type="evidence" value="ECO:0007669"/>
    <property type="project" value="InterPro"/>
</dbReference>
<dbReference type="Gene3D" id="1.10.760.10">
    <property type="entry name" value="Cytochrome c-like domain"/>
    <property type="match status" value="1"/>
</dbReference>
<dbReference type="HAMAP" id="MF_01378">
    <property type="entry name" value="PSII_Cyt550"/>
    <property type="match status" value="1"/>
</dbReference>
<dbReference type="InterPro" id="IPR009056">
    <property type="entry name" value="Cyt_c-like_dom"/>
</dbReference>
<dbReference type="InterPro" id="IPR036909">
    <property type="entry name" value="Cyt_c-like_dom_sf"/>
</dbReference>
<dbReference type="InterPro" id="IPR029490">
    <property type="entry name" value="Cytochrom_C550"/>
</dbReference>
<dbReference type="InterPro" id="IPR017851">
    <property type="entry name" value="PsbV_cyt_c550"/>
</dbReference>
<dbReference type="InterPro" id="IPR016003">
    <property type="entry name" value="PsbV_cyt_c550-like"/>
</dbReference>
<dbReference type="NCBIfam" id="TIGR03045">
    <property type="entry name" value="PS_II_C550"/>
    <property type="match status" value="1"/>
</dbReference>
<dbReference type="Pfam" id="PF14495">
    <property type="entry name" value="Cytochrom_C550"/>
    <property type="match status" value="1"/>
</dbReference>
<dbReference type="PIRSF" id="PIRSF005890">
    <property type="entry name" value="Phot_II_cyt_c550"/>
    <property type="match status" value="1"/>
</dbReference>
<dbReference type="SUPFAM" id="SSF46626">
    <property type="entry name" value="Cytochrome c"/>
    <property type="match status" value="1"/>
</dbReference>
<dbReference type="PROSITE" id="PS51007">
    <property type="entry name" value="CYTC"/>
    <property type="match status" value="1"/>
</dbReference>
<feature type="signal peptide" evidence="1">
    <location>
        <begin position="1"/>
        <end position="26"/>
    </location>
</feature>
<feature type="chain" id="PRO_1000144884" description="Photosystem II extrinsic protein V">
    <location>
        <begin position="27"/>
        <end position="163"/>
    </location>
</feature>
<feature type="binding site" description="covalent" evidence="1">
    <location>
        <position position="63"/>
    </location>
    <ligand>
        <name>heme c</name>
        <dbReference type="ChEBI" id="CHEBI:61717"/>
    </ligand>
</feature>
<feature type="binding site" description="covalent" evidence="1">
    <location>
        <position position="66"/>
    </location>
    <ligand>
        <name>heme c</name>
        <dbReference type="ChEBI" id="CHEBI:61717"/>
    </ligand>
</feature>
<feature type="binding site" description="axial binding residue" evidence="1">
    <location>
        <position position="67"/>
    </location>
    <ligand>
        <name>heme c</name>
        <dbReference type="ChEBI" id="CHEBI:61717"/>
    </ligand>
    <ligandPart>
        <name>Fe</name>
        <dbReference type="ChEBI" id="CHEBI:18248"/>
    </ligandPart>
</feature>
<feature type="binding site" description="axial binding residue" evidence="1">
    <location>
        <position position="118"/>
    </location>
    <ligand>
        <name>heme c</name>
        <dbReference type="ChEBI" id="CHEBI:61717"/>
    </ligand>
    <ligandPart>
        <name>Fe</name>
        <dbReference type="ChEBI" id="CHEBI:18248"/>
    </ligandPart>
</feature>
<name>CY550_NOSP7</name>
<accession>B2IVD8</accession>
<comment type="function">
    <text evidence="1">One of the extrinsic, lumenal subunits of photosystem II (PSII). PSII is a light-driven water plastoquinone oxidoreductase, using light energy to abstract electrons from H(2)O, generating a proton gradient subsequently used for ATP formation. The extrinsic proteins stabilize the structure of photosystem II oxygen-evolving complex (OEC), the ion environment of oxygen evolution and protect the OEC against heat-induced inactivation. Low-potential cytochrome c that plays a role in the OEC of PSII.</text>
</comment>
<comment type="cofactor">
    <cofactor evidence="1">
        <name>heme c</name>
        <dbReference type="ChEBI" id="CHEBI:61717"/>
    </cofactor>
    <text evidence="1">Binds 1 heme c group covalently per subunit.</text>
</comment>
<comment type="subunit">
    <text evidence="1">PSII is composed of 1 copy each of membrane proteins PsbA, PsbB, PsbC, PsbD, PsbE, PsbF, PsbH, PsbI, PsbJ, PsbK, PsbL, PsbM, PsbT, PsbX, PsbY, PsbZ, Psb30/Ycf12, peripheral proteins PsbO, CyanoQ (PsbQ), PsbU, PsbV and a large number of cofactors. It forms dimeric complexes.</text>
</comment>
<comment type="subcellular location">
    <subcellularLocation>
        <location evidence="1">Cellular thylakoid membrane</location>
        <topology evidence="1">Peripheral membrane protein</topology>
        <orientation evidence="1">Lumenal side</orientation>
    </subcellularLocation>
    <text evidence="1">Associated with photosystem II at the lumenal side of the thylakoid membrane.</text>
</comment>
<comment type="similarity">
    <text evidence="1">Belongs to the cytochrome c family. PsbV subfamily.</text>
</comment>
<gene>
    <name evidence="1" type="primary">psbV</name>
    <name type="ordered locus">Npun_R2790</name>
</gene>
<keyword id="KW-0249">Electron transport</keyword>
<keyword id="KW-0349">Heme</keyword>
<keyword id="KW-0408">Iron</keyword>
<keyword id="KW-0472">Membrane</keyword>
<keyword id="KW-0479">Metal-binding</keyword>
<keyword id="KW-0602">Photosynthesis</keyword>
<keyword id="KW-0604">Photosystem II</keyword>
<keyword id="KW-1185">Reference proteome</keyword>
<keyword id="KW-0732">Signal</keyword>
<keyword id="KW-0793">Thylakoid</keyword>
<keyword id="KW-0813">Transport</keyword>
<reference key="1">
    <citation type="journal article" date="2013" name="Plant Physiol.">
        <title>A Nostoc punctiforme Sugar Transporter Necessary to Establish a Cyanobacterium-Plant Symbiosis.</title>
        <authorList>
            <person name="Ekman M."/>
            <person name="Picossi S."/>
            <person name="Campbell E.L."/>
            <person name="Meeks J.C."/>
            <person name="Flores E."/>
        </authorList>
    </citation>
    <scope>NUCLEOTIDE SEQUENCE [LARGE SCALE GENOMIC DNA]</scope>
    <source>
        <strain>ATCC 29133 / PCC 73102</strain>
    </source>
</reference>
<evidence type="ECO:0000255" key="1">
    <source>
        <dbReference type="HAMAP-Rule" id="MF_01378"/>
    </source>
</evidence>
<proteinExistence type="inferred from homology"/>